<comment type="function">
    <text evidence="3 5">Probable transcription factor specific for skin keratinocytes. May play a role in the differentiation of spermatozoa and oocytes (PubMed:14988505). May also play an important role in early urinary-tract development (PubMed:31051115).</text>
</comment>
<comment type="interaction">
    <interactant intactId="EBI-6115618">
        <id>Q6ZN30</id>
    </interactant>
    <interactant intactId="EBI-8639312">
        <id>P25800</id>
        <label>LMO1</label>
    </interactant>
    <organismsDiffer>false</organismsDiffer>
    <experiments>3</experiments>
</comment>
<comment type="subcellular location">
    <subcellularLocation>
        <location evidence="4">Nucleus</location>
    </subcellularLocation>
</comment>
<comment type="alternative products">
    <event type="alternative splicing"/>
    <isoform>
        <id>Q6ZN30-1</id>
        <name evidence="4">1</name>
        <sequence type="displayed"/>
    </isoform>
    <isoform>
        <id>Q6ZN30-2</id>
        <name evidence="7">2</name>
        <sequence type="described" ref="VSP_051873 VSP_051874"/>
    </isoform>
</comment>
<comment type="tissue specificity">
    <text evidence="3 4">Highly expressed in testis, uterus and small intestine, and weakly expressed in colon and prostate. Also expressed in skin, primary keratinocytes, immortalized keratinocytes, and HeLa and HEK293 cells. Not detected in blood, thymus, spleen or Hep-G2 cells.</text>
</comment>
<comment type="developmental stage">
    <text evidence="5">In a 7-week embryo, expressed in the urogenital sinus, the precursor of the bladder, and its outflow tract. The most prominent expression is in the primitive urothelium, and there is weaker expression in the surrounding mesenchyme. Expression also detected in the urothelium of the adult male urethra.</text>
</comment>
<comment type="disease" evidence="5">
    <disease id="DI-05673">
        <name>Lower urinary tract obstruction, congenital</name>
        <acronym>LUTO</acronym>
        <description>A disorder characterized by urinary bladder outflow obstruction, which can represent an anatomical blockage or a functional obstruction. The most common anatomical causes are posterior urethral valves at the level of the prostatic urethra, a lesion unique to males. Less common are anterior urethral valves, also called urethral atresia, that can occur in either sex. LUTO is an autosomal dominant disease with variable expression.</description>
        <dbReference type="MIM" id="618612"/>
    </disease>
    <text>The disease is caused by variants affecting the gene represented in this entry.</text>
</comment>
<comment type="sequence caution" evidence="7">
    <conflict type="erroneous initiation">
        <sequence resource="EMBL-CDS" id="AAR99389"/>
    </conflict>
    <text>Truncated N-terminus.</text>
</comment>
<comment type="sequence caution" evidence="7">
    <conflict type="erroneous initiation">
        <sequence resource="EMBL-CDS" id="BAA90908"/>
    </conflict>
    <text>Truncated N-terminus.</text>
</comment>
<comment type="sequence caution" evidence="7">
    <conflict type="erroneous initiation">
        <sequence resource="EMBL-CDS" id="BAB15269"/>
    </conflict>
    <text>Truncated N-terminus.</text>
</comment>
<comment type="sequence caution" evidence="7">
    <conflict type="erroneous initiation">
        <sequence resource="EMBL-CDS" id="BAC03837"/>
    </conflict>
    <text>Truncated N-terminus.</text>
</comment>
<protein>
    <recommendedName>
        <fullName>Zinc finger protein basonuclin-2</fullName>
    </recommendedName>
</protein>
<keyword id="KW-0025">Alternative splicing</keyword>
<keyword id="KW-0225">Disease variant</keyword>
<keyword id="KW-1017">Isopeptide bond</keyword>
<keyword id="KW-0479">Metal-binding</keyword>
<keyword id="KW-0539">Nucleus</keyword>
<keyword id="KW-0597">Phosphoprotein</keyword>
<keyword id="KW-1267">Proteomics identification</keyword>
<keyword id="KW-1185">Reference proteome</keyword>
<keyword id="KW-0677">Repeat</keyword>
<keyword id="KW-0804">Transcription</keyword>
<keyword id="KW-0805">Transcription regulation</keyword>
<keyword id="KW-0832">Ubl conjugation</keyword>
<keyword id="KW-0862">Zinc</keyword>
<keyword id="KW-0863">Zinc-finger</keyword>
<name>BNC2_HUMAN</name>
<evidence type="ECO:0000255" key="1">
    <source>
        <dbReference type="PROSITE-ProRule" id="PRU00042"/>
    </source>
</evidence>
<evidence type="ECO:0000256" key="2">
    <source>
        <dbReference type="SAM" id="MobiDB-lite"/>
    </source>
</evidence>
<evidence type="ECO:0000269" key="3">
    <source>
    </source>
</evidence>
<evidence type="ECO:0000269" key="4">
    <source>
    </source>
</evidence>
<evidence type="ECO:0000269" key="5">
    <source>
    </source>
</evidence>
<evidence type="ECO:0000303" key="6">
    <source>
    </source>
</evidence>
<evidence type="ECO:0000305" key="7"/>
<evidence type="ECO:0000312" key="8">
    <source>
        <dbReference type="EMBL" id="AAR99389.1"/>
    </source>
</evidence>
<evidence type="ECO:0000312" key="9">
    <source>
        <dbReference type="EMBL" id="BAA90908.1"/>
    </source>
</evidence>
<evidence type="ECO:0000312" key="10">
    <source>
        <dbReference type="EMBL" id="BAB15269.1"/>
    </source>
</evidence>
<evidence type="ECO:0000312" key="11">
    <source>
        <dbReference type="EMBL" id="BAC03837.1"/>
    </source>
</evidence>
<evidence type="ECO:0000312" key="12">
    <source>
        <dbReference type="EMBL" id="BAD18545.1"/>
    </source>
</evidence>
<evidence type="ECO:0000312" key="13">
    <source>
        <dbReference type="HGNC" id="HGNC:30988"/>
    </source>
</evidence>
<evidence type="ECO:0007744" key="14">
    <source>
    </source>
</evidence>
<evidence type="ECO:0007744" key="15">
    <source>
    </source>
</evidence>
<proteinExistence type="evidence at protein level"/>
<accession>Q6ZN30</accession>
<accession>B1APG9</accession>
<accession>Q6T3A3</accession>
<accession>Q8NAR2</accession>
<accession>Q9H6J0</accession>
<accession>Q9NXV0</accession>
<reference evidence="7 12" key="1">
    <citation type="journal article" date="2004" name="Nat. Genet.">
        <title>Complete sequencing and characterization of 21,243 full-length human cDNAs.</title>
        <authorList>
            <person name="Ota T."/>
            <person name="Suzuki Y."/>
            <person name="Nishikawa T."/>
            <person name="Otsuki T."/>
            <person name="Sugiyama T."/>
            <person name="Irie R."/>
            <person name="Wakamatsu A."/>
            <person name="Hayashi K."/>
            <person name="Sato H."/>
            <person name="Nagai K."/>
            <person name="Kimura K."/>
            <person name="Makita H."/>
            <person name="Sekine M."/>
            <person name="Obayashi M."/>
            <person name="Nishi T."/>
            <person name="Shibahara T."/>
            <person name="Tanaka T."/>
            <person name="Ishii S."/>
            <person name="Yamamoto J."/>
            <person name="Saito K."/>
            <person name="Kawai Y."/>
            <person name="Isono Y."/>
            <person name="Nakamura Y."/>
            <person name="Nagahari K."/>
            <person name="Murakami K."/>
            <person name="Yasuda T."/>
            <person name="Iwayanagi T."/>
            <person name="Wagatsuma M."/>
            <person name="Shiratori A."/>
            <person name="Sudo H."/>
            <person name="Hosoiri T."/>
            <person name="Kaku Y."/>
            <person name="Kodaira H."/>
            <person name="Kondo H."/>
            <person name="Sugawara M."/>
            <person name="Takahashi M."/>
            <person name="Kanda K."/>
            <person name="Yokoi T."/>
            <person name="Furuya T."/>
            <person name="Kikkawa E."/>
            <person name="Omura Y."/>
            <person name="Abe K."/>
            <person name="Kamihara K."/>
            <person name="Katsuta N."/>
            <person name="Sato K."/>
            <person name="Tanikawa M."/>
            <person name="Yamazaki M."/>
            <person name="Ninomiya K."/>
            <person name="Ishibashi T."/>
            <person name="Yamashita H."/>
            <person name="Murakawa K."/>
            <person name="Fujimori K."/>
            <person name="Tanai H."/>
            <person name="Kimata M."/>
            <person name="Watanabe M."/>
            <person name="Hiraoka S."/>
            <person name="Chiba Y."/>
            <person name="Ishida S."/>
            <person name="Ono Y."/>
            <person name="Takiguchi S."/>
            <person name="Watanabe S."/>
            <person name="Yosida M."/>
            <person name="Hotuta T."/>
            <person name="Kusano J."/>
            <person name="Kanehori K."/>
            <person name="Takahashi-Fujii A."/>
            <person name="Hara H."/>
            <person name="Tanase T.-O."/>
            <person name="Nomura Y."/>
            <person name="Togiya S."/>
            <person name="Komai F."/>
            <person name="Hara R."/>
            <person name="Takeuchi K."/>
            <person name="Arita M."/>
            <person name="Imose N."/>
            <person name="Musashino K."/>
            <person name="Yuuki H."/>
            <person name="Oshima A."/>
            <person name="Sasaki N."/>
            <person name="Aotsuka S."/>
            <person name="Yoshikawa Y."/>
            <person name="Matsunawa H."/>
            <person name="Ichihara T."/>
            <person name="Shiohata N."/>
            <person name="Sano S."/>
            <person name="Moriya S."/>
            <person name="Momiyama H."/>
            <person name="Satoh N."/>
            <person name="Takami S."/>
            <person name="Terashima Y."/>
            <person name="Suzuki O."/>
            <person name="Nakagawa S."/>
            <person name="Senoh A."/>
            <person name="Mizoguchi H."/>
            <person name="Goto Y."/>
            <person name="Shimizu F."/>
            <person name="Wakebe H."/>
            <person name="Hishigaki H."/>
            <person name="Watanabe T."/>
            <person name="Sugiyama A."/>
            <person name="Takemoto M."/>
            <person name="Kawakami B."/>
            <person name="Yamazaki M."/>
            <person name="Watanabe K."/>
            <person name="Kumagai A."/>
            <person name="Itakura S."/>
            <person name="Fukuzumi Y."/>
            <person name="Fujimori Y."/>
            <person name="Komiyama M."/>
            <person name="Tashiro H."/>
            <person name="Tanigami A."/>
            <person name="Fujiwara T."/>
            <person name="Ono T."/>
            <person name="Yamada K."/>
            <person name="Fujii Y."/>
            <person name="Ozaki K."/>
            <person name="Hirao M."/>
            <person name="Ohmori Y."/>
            <person name="Kawabata A."/>
            <person name="Hikiji T."/>
            <person name="Kobatake N."/>
            <person name="Inagaki H."/>
            <person name="Ikema Y."/>
            <person name="Okamoto S."/>
            <person name="Okitani R."/>
            <person name="Kawakami T."/>
            <person name="Noguchi S."/>
            <person name="Itoh T."/>
            <person name="Shigeta K."/>
            <person name="Senba T."/>
            <person name="Matsumura K."/>
            <person name="Nakajima Y."/>
            <person name="Mizuno T."/>
            <person name="Morinaga M."/>
            <person name="Sasaki M."/>
            <person name="Togashi T."/>
            <person name="Oyama M."/>
            <person name="Hata H."/>
            <person name="Watanabe M."/>
            <person name="Komatsu T."/>
            <person name="Mizushima-Sugano J."/>
            <person name="Satoh T."/>
            <person name="Shirai Y."/>
            <person name="Takahashi Y."/>
            <person name="Nakagawa K."/>
            <person name="Okumura K."/>
            <person name="Nagase T."/>
            <person name="Nomura N."/>
            <person name="Kikuchi H."/>
            <person name="Masuho Y."/>
            <person name="Yamashita R."/>
            <person name="Nakai K."/>
            <person name="Yada T."/>
            <person name="Nakamura Y."/>
            <person name="Ohara O."/>
            <person name="Isogai T."/>
            <person name="Sugano S."/>
        </authorList>
    </citation>
    <scope>NUCLEOTIDE SEQUENCE [LARGE SCALE MRNA] (ISOFORMS 1 AND 2)</scope>
    <source>
        <tissue evidence="9">Colon</tissue>
        <tissue evidence="10">Kidney epithelium</tissue>
        <tissue evidence="11">Teratocarcinoma</tissue>
        <tissue evidence="12">Tongue</tissue>
    </source>
</reference>
<reference key="2">
    <citation type="journal article" date="2004" name="Nature">
        <title>DNA sequence and analysis of human chromosome 9.</title>
        <authorList>
            <person name="Humphray S.J."/>
            <person name="Oliver K."/>
            <person name="Hunt A.R."/>
            <person name="Plumb R.W."/>
            <person name="Loveland J.E."/>
            <person name="Howe K.L."/>
            <person name="Andrews T.D."/>
            <person name="Searle S."/>
            <person name="Hunt S.E."/>
            <person name="Scott C.E."/>
            <person name="Jones M.C."/>
            <person name="Ainscough R."/>
            <person name="Almeida J.P."/>
            <person name="Ambrose K.D."/>
            <person name="Ashwell R.I.S."/>
            <person name="Babbage A.K."/>
            <person name="Babbage S."/>
            <person name="Bagguley C.L."/>
            <person name="Bailey J."/>
            <person name="Banerjee R."/>
            <person name="Barker D.J."/>
            <person name="Barlow K.F."/>
            <person name="Bates K."/>
            <person name="Beasley H."/>
            <person name="Beasley O."/>
            <person name="Bird C.P."/>
            <person name="Bray-Allen S."/>
            <person name="Brown A.J."/>
            <person name="Brown J.Y."/>
            <person name="Burford D."/>
            <person name="Burrill W."/>
            <person name="Burton J."/>
            <person name="Carder C."/>
            <person name="Carter N.P."/>
            <person name="Chapman J.C."/>
            <person name="Chen Y."/>
            <person name="Clarke G."/>
            <person name="Clark S.Y."/>
            <person name="Clee C.M."/>
            <person name="Clegg S."/>
            <person name="Collier R.E."/>
            <person name="Corby N."/>
            <person name="Crosier M."/>
            <person name="Cummings A.T."/>
            <person name="Davies J."/>
            <person name="Dhami P."/>
            <person name="Dunn M."/>
            <person name="Dutta I."/>
            <person name="Dyer L.W."/>
            <person name="Earthrowl M.E."/>
            <person name="Faulkner L."/>
            <person name="Fleming C.J."/>
            <person name="Frankish A."/>
            <person name="Frankland J.A."/>
            <person name="French L."/>
            <person name="Fricker D.G."/>
            <person name="Garner P."/>
            <person name="Garnett J."/>
            <person name="Ghori J."/>
            <person name="Gilbert J.G.R."/>
            <person name="Glison C."/>
            <person name="Grafham D.V."/>
            <person name="Gribble S."/>
            <person name="Griffiths C."/>
            <person name="Griffiths-Jones S."/>
            <person name="Grocock R."/>
            <person name="Guy J."/>
            <person name="Hall R.E."/>
            <person name="Hammond S."/>
            <person name="Harley J.L."/>
            <person name="Harrison E.S.I."/>
            <person name="Hart E.A."/>
            <person name="Heath P.D."/>
            <person name="Henderson C.D."/>
            <person name="Hopkins B.L."/>
            <person name="Howard P.J."/>
            <person name="Howden P.J."/>
            <person name="Huckle E."/>
            <person name="Johnson C."/>
            <person name="Johnson D."/>
            <person name="Joy A.A."/>
            <person name="Kay M."/>
            <person name="Keenan S."/>
            <person name="Kershaw J.K."/>
            <person name="Kimberley A.M."/>
            <person name="King A."/>
            <person name="Knights A."/>
            <person name="Laird G.K."/>
            <person name="Langford C."/>
            <person name="Lawlor S."/>
            <person name="Leongamornlert D.A."/>
            <person name="Leversha M."/>
            <person name="Lloyd C."/>
            <person name="Lloyd D.M."/>
            <person name="Lovell J."/>
            <person name="Martin S."/>
            <person name="Mashreghi-Mohammadi M."/>
            <person name="Matthews L."/>
            <person name="McLaren S."/>
            <person name="McLay K.E."/>
            <person name="McMurray A."/>
            <person name="Milne S."/>
            <person name="Nickerson T."/>
            <person name="Nisbett J."/>
            <person name="Nordsiek G."/>
            <person name="Pearce A.V."/>
            <person name="Peck A.I."/>
            <person name="Porter K.M."/>
            <person name="Pandian R."/>
            <person name="Pelan S."/>
            <person name="Phillimore B."/>
            <person name="Povey S."/>
            <person name="Ramsey Y."/>
            <person name="Rand V."/>
            <person name="Scharfe M."/>
            <person name="Sehra H.K."/>
            <person name="Shownkeen R."/>
            <person name="Sims S.K."/>
            <person name="Skuce C.D."/>
            <person name="Smith M."/>
            <person name="Steward C.A."/>
            <person name="Swarbreck D."/>
            <person name="Sycamore N."/>
            <person name="Tester J."/>
            <person name="Thorpe A."/>
            <person name="Tracey A."/>
            <person name="Tromans A."/>
            <person name="Thomas D.W."/>
            <person name="Wall M."/>
            <person name="Wallis J.M."/>
            <person name="West A.P."/>
            <person name="Whitehead S.L."/>
            <person name="Willey D.L."/>
            <person name="Williams S.A."/>
            <person name="Wilming L."/>
            <person name="Wray P.W."/>
            <person name="Young L."/>
            <person name="Ashurst J.L."/>
            <person name="Coulson A."/>
            <person name="Blocker H."/>
            <person name="Durbin R.M."/>
            <person name="Sulston J.E."/>
            <person name="Hubbard T."/>
            <person name="Jackson M.J."/>
            <person name="Bentley D.R."/>
            <person name="Beck S."/>
            <person name="Rogers J."/>
            <person name="Dunham I."/>
        </authorList>
    </citation>
    <scope>NUCLEOTIDE SEQUENCE [LARGE SCALE GENOMIC DNA]</scope>
</reference>
<reference evidence="7 8" key="3">
    <citation type="journal article" date="2004" name="Genomics">
        <title>Identification of Basonuclin2, a DNA-binding zinc-finger protein expressed in germ tissues and skin keratinocytes.</title>
        <authorList>
            <person name="Romano R.-A."/>
            <person name="Li H."/>
            <person name="Tummala R."/>
            <person name="Maul R."/>
            <person name="Sinha S."/>
        </authorList>
    </citation>
    <scope>NUCLEOTIDE SEQUENCE [MRNA] OF 73-1099 (ISOFORM 1)</scope>
    <scope>SUBCELLULAR LOCATION</scope>
    <scope>TISSUE SPECIFICITY</scope>
</reference>
<reference evidence="7" key="4">
    <citation type="journal article" date="2004" name="Proc. Natl. Acad. Sci. U.S.A.">
        <title>Basonuclin 2: an extremely conserved homolog of the zinc finger protein basonuclin.</title>
        <authorList>
            <person name="Vanhoutteghem A."/>
            <person name="Djian P."/>
        </authorList>
    </citation>
    <scope>PROBABLE FUNCTION</scope>
    <scope>TISSUE SPECIFICITY</scope>
</reference>
<reference key="5">
    <citation type="journal article" date="2010" name="Sci. Signal.">
        <title>Quantitative phosphoproteomics reveals widespread full phosphorylation site occupancy during mitosis.</title>
        <authorList>
            <person name="Olsen J.V."/>
            <person name="Vermeulen M."/>
            <person name="Santamaria A."/>
            <person name="Kumar C."/>
            <person name="Miller M.L."/>
            <person name="Jensen L.J."/>
            <person name="Gnad F."/>
            <person name="Cox J."/>
            <person name="Jensen T.S."/>
            <person name="Nigg E.A."/>
            <person name="Brunak S."/>
            <person name="Mann M."/>
        </authorList>
    </citation>
    <scope>PHOSPHORYLATION [LARGE SCALE ANALYSIS] AT SER-561</scope>
    <scope>IDENTIFICATION BY MASS SPECTROMETRY [LARGE SCALE ANALYSIS]</scope>
    <source>
        <tissue>Cervix carcinoma</tissue>
    </source>
</reference>
<reference key="6">
    <citation type="journal article" date="2017" name="Nat. Struct. Mol. Biol.">
        <title>Site-specific mapping of the human SUMO proteome reveals co-modification with phosphorylation.</title>
        <authorList>
            <person name="Hendriks I.A."/>
            <person name="Lyon D."/>
            <person name="Young C."/>
            <person name="Jensen L.J."/>
            <person name="Vertegaal A.C."/>
            <person name="Nielsen M.L."/>
        </authorList>
    </citation>
    <scope>SUMOYLATION [LARGE SCALE ANALYSIS] AT LYS-277; LYS-396; LYS-416; LYS-421; LYS-641; LYS-894 AND LYS-919</scope>
    <scope>IDENTIFICATION BY MASS SPECTROMETRY [LARGE SCALE ANALYSIS]</scope>
</reference>
<reference key="7">
    <citation type="journal article" date="2019" name="Am. J. Hum. Genet.">
        <title>Rare variants in BNC2 are implicated in autosomal-dominant congenital lower urinary-tract obstruction.</title>
        <authorList>
            <person name="Kolvenbach C.M."/>
            <person name="Dworschak G.C."/>
            <person name="Frese S."/>
            <person name="Japp A.S."/>
            <person name="Schuster P."/>
            <person name="Wenzlitschke N."/>
            <person name="Yilmaz O."/>
            <person name="Lopes F.M."/>
            <person name="Pryalukhin A."/>
            <person name="Schierbaum L."/>
            <person name="van der Zanden L.F.M."/>
            <person name="Kause F."/>
            <person name="Schneider R."/>
            <person name="Taranta-Janusz K."/>
            <person name="Szczepanska M."/>
            <person name="Pawlaczyk K."/>
            <person name="Newman W.G."/>
            <person name="Beaman G.M."/>
            <person name="Stuart H.M."/>
            <person name="Cervellione R.M."/>
            <person name="Feitz W.F.J."/>
            <person name="van Rooij I.A.L.M."/>
            <person name="Schreuder M.F."/>
            <person name="Steffens M."/>
            <person name="Weber S."/>
            <person name="Merz W.M."/>
            <person name="Feldkoetter M."/>
            <person name="Hoppe B."/>
            <person name="Thiele H."/>
            <person name="Altmueller J."/>
            <person name="Berg C."/>
            <person name="Kristiansen G."/>
            <person name="Ludwig M."/>
            <person name="Reutter H."/>
            <person name="Woolf A.S."/>
            <person name="Hildebrandt F."/>
            <person name="Grote P."/>
            <person name="Zaniew M."/>
            <person name="Odermatt B."/>
            <person name="Hilger A.C."/>
        </authorList>
    </citation>
    <scope>INVOLVEMENT IN LUTO</scope>
    <scope>VARIANTS LUTO ILE-158; GLN-346; 853-ARG--ASP-1099 DEL AND ARG-888</scope>
    <scope>FUNCTION</scope>
    <scope>DEVELOPMENTAL STAGE</scope>
</reference>
<feature type="chain" id="PRO_0000046934" description="Zinc finger protein basonuclin-2">
    <location>
        <begin position="1"/>
        <end position="1099"/>
    </location>
</feature>
<feature type="zinc finger region" description="C2H2-type 1" evidence="1">
    <location>
        <begin position="441"/>
        <end position="464"/>
    </location>
</feature>
<feature type="zinc finger region" description="C2H2-type 2" evidence="1">
    <location>
        <begin position="833"/>
        <end position="856"/>
    </location>
</feature>
<feature type="zinc finger region" description="C2H2-type 3" evidence="1">
    <location>
        <begin position="1035"/>
        <end position="1058"/>
    </location>
</feature>
<feature type="zinc finger region" description="C2H2-type 4" evidence="1">
    <location>
        <begin position="1063"/>
        <end position="1090"/>
    </location>
</feature>
<feature type="region of interest" description="Disordered" evidence="2">
    <location>
        <begin position="45"/>
        <end position="66"/>
    </location>
</feature>
<feature type="region of interest" description="Disordered" evidence="2">
    <location>
        <begin position="357"/>
        <end position="385"/>
    </location>
</feature>
<feature type="region of interest" description="Disordered" evidence="2">
    <location>
        <begin position="397"/>
        <end position="423"/>
    </location>
</feature>
<feature type="region of interest" description="Disordered" evidence="2">
    <location>
        <begin position="622"/>
        <end position="641"/>
    </location>
</feature>
<feature type="region of interest" description="Disordered" evidence="2">
    <location>
        <begin position="648"/>
        <end position="742"/>
    </location>
</feature>
<feature type="region of interest" description="Disordered" evidence="2">
    <location>
        <begin position="929"/>
        <end position="948"/>
    </location>
</feature>
<feature type="region of interest" description="Disordered" evidence="2">
    <location>
        <begin position="968"/>
        <end position="1008"/>
    </location>
</feature>
<feature type="region of interest" description="Disordered" evidence="2">
    <location>
        <begin position="1079"/>
        <end position="1099"/>
    </location>
</feature>
<feature type="compositionally biased region" description="Basic and acidic residues" evidence="2">
    <location>
        <begin position="49"/>
        <end position="66"/>
    </location>
</feature>
<feature type="compositionally biased region" description="Low complexity" evidence="2">
    <location>
        <begin position="361"/>
        <end position="372"/>
    </location>
</feature>
<feature type="compositionally biased region" description="Polar residues" evidence="2">
    <location>
        <begin position="375"/>
        <end position="385"/>
    </location>
</feature>
<feature type="compositionally biased region" description="Acidic residues" evidence="2">
    <location>
        <begin position="648"/>
        <end position="661"/>
    </location>
</feature>
<feature type="compositionally biased region" description="Basic and acidic residues" evidence="2">
    <location>
        <begin position="670"/>
        <end position="680"/>
    </location>
</feature>
<feature type="compositionally biased region" description="Basic and acidic residues" evidence="2">
    <location>
        <begin position="719"/>
        <end position="742"/>
    </location>
</feature>
<feature type="compositionally biased region" description="Acidic residues" evidence="2">
    <location>
        <begin position="982"/>
        <end position="995"/>
    </location>
</feature>
<feature type="modified residue" description="Phosphoserine" evidence="14">
    <location>
        <position position="561"/>
    </location>
</feature>
<feature type="cross-link" description="Glycyl lysine isopeptide (Lys-Gly) (interchain with G-Cter in SUMO2)" evidence="15">
    <location>
        <position position="277"/>
    </location>
</feature>
<feature type="cross-link" description="Glycyl lysine isopeptide (Lys-Gly) (interchain with G-Cter in SUMO2)" evidence="15">
    <location>
        <position position="396"/>
    </location>
</feature>
<feature type="cross-link" description="Glycyl lysine isopeptide (Lys-Gly) (interchain with G-Cter in SUMO2)" evidence="15">
    <location>
        <position position="416"/>
    </location>
</feature>
<feature type="cross-link" description="Glycyl lysine isopeptide (Lys-Gly) (interchain with G-Cter in SUMO2)" evidence="15">
    <location>
        <position position="421"/>
    </location>
</feature>
<feature type="cross-link" description="Glycyl lysine isopeptide (Lys-Gly) (interchain with G-Cter in SUMO2)" evidence="15">
    <location>
        <position position="641"/>
    </location>
</feature>
<feature type="cross-link" description="Glycyl lysine isopeptide (Lys-Gly) (interchain with G-Cter in SUMO2)" evidence="15">
    <location>
        <position position="894"/>
    </location>
</feature>
<feature type="cross-link" description="Glycyl lysine isopeptide (Lys-Gly) (interchain with G-Cter in SUMO2)" evidence="15">
    <location>
        <position position="919"/>
    </location>
</feature>
<feature type="splice variant" id="VSP_051873" description="In isoform 2." evidence="6">
    <original>HSANINLHRKLLTKELDDMGLDS</original>
    <variation>YWEKSNEQNGLLVSWGETLSSLK</variation>
    <location>
        <begin position="881"/>
        <end position="903"/>
    </location>
</feature>
<feature type="splice variant" id="VSP_051874" description="In isoform 2." evidence="6">
    <location>
        <begin position="904"/>
        <end position="1099"/>
    </location>
</feature>
<feature type="sequence variant" id="VAR_083492" description="In LUTO; uncertain significance; dbSNP:rs144242525." evidence="5">
    <original>T</original>
    <variation>I</variation>
    <location>
        <position position="158"/>
    </location>
</feature>
<feature type="sequence variant" id="VAR_083493" description="In LUTO; uncertain significance; dbSNP:rs945575406." evidence="5">
    <original>E</original>
    <variation>Q</variation>
    <location>
        <position position="346"/>
    </location>
</feature>
<feature type="sequence variant" id="VAR_052707" description="In dbSNP:rs4961490.">
    <original>L</original>
    <variation>V</variation>
    <location>
        <position position="550"/>
    </location>
</feature>
<feature type="sequence variant" id="VAR_033543" description="In dbSNP:rs3739714.">
    <original>T</original>
    <variation>A</variation>
    <location>
        <position position="782"/>
    </location>
</feature>
<feature type="sequence variant" id="VAR_083494" description="In LUTO; dbSNP:rs1350162888." evidence="5">
    <location>
        <begin position="853"/>
        <end position="1099"/>
    </location>
</feature>
<feature type="sequence variant" id="VAR_083495" description="In LUTO; dbSNP:rs1563774686." evidence="5">
    <original>H</original>
    <variation>R</variation>
    <location>
        <position position="888"/>
    </location>
</feature>
<feature type="sequence conflict" description="In Ref. 1; BAC03837." evidence="7" ref="1">
    <original>F</original>
    <variation>L</variation>
    <location>
        <position position="560"/>
    </location>
</feature>
<feature type="sequence conflict" description="In Ref. 1; BAC03837." evidence="7" ref="1">
    <original>K</original>
    <variation>T</variation>
    <location>
        <position position="630"/>
    </location>
</feature>
<feature type="sequence conflict" description="In Ref. 1; BAB15269." evidence="7" ref="1">
    <original>G</original>
    <variation>E</variation>
    <location>
        <position position="797"/>
    </location>
</feature>
<gene>
    <name evidence="13" type="primary">BNC2</name>
</gene>
<dbReference type="EMBL" id="AK000050">
    <property type="protein sequence ID" value="BAA90908.1"/>
    <property type="status" value="ALT_INIT"/>
    <property type="molecule type" value="mRNA"/>
</dbReference>
<dbReference type="EMBL" id="AK025882">
    <property type="protein sequence ID" value="BAB15269.1"/>
    <property type="status" value="ALT_INIT"/>
    <property type="molecule type" value="mRNA"/>
</dbReference>
<dbReference type="EMBL" id="AK092247">
    <property type="protein sequence ID" value="BAC03837.1"/>
    <property type="status" value="ALT_INIT"/>
    <property type="molecule type" value="mRNA"/>
</dbReference>
<dbReference type="EMBL" id="AK131398">
    <property type="protein sequence ID" value="BAD18545.1"/>
    <property type="molecule type" value="mRNA"/>
</dbReference>
<dbReference type="EMBL" id="AL449983">
    <property type="status" value="NOT_ANNOTATED_CDS"/>
    <property type="molecule type" value="Genomic_DNA"/>
</dbReference>
<dbReference type="EMBL" id="AL450003">
    <property type="status" value="NOT_ANNOTATED_CDS"/>
    <property type="molecule type" value="Genomic_DNA"/>
</dbReference>
<dbReference type="EMBL" id="AL450105">
    <property type="status" value="NOT_ANNOTATED_CDS"/>
    <property type="molecule type" value="Genomic_DNA"/>
</dbReference>
<dbReference type="EMBL" id="AY438376">
    <property type="protein sequence ID" value="AAR99389.1"/>
    <property type="status" value="ALT_INIT"/>
    <property type="molecule type" value="mRNA"/>
</dbReference>
<dbReference type="CCDS" id="CCDS6482.2">
    <molecule id="Q6ZN30-1"/>
</dbReference>
<dbReference type="RefSeq" id="NP_060107.3">
    <molecule id="Q6ZN30-1"/>
    <property type="nucleotide sequence ID" value="NM_017637.5"/>
</dbReference>
<dbReference type="BioGRID" id="120155">
    <property type="interactions" value="12"/>
</dbReference>
<dbReference type="FunCoup" id="Q6ZN30">
    <property type="interactions" value="1934"/>
</dbReference>
<dbReference type="IntAct" id="Q6ZN30">
    <property type="interactions" value="7"/>
</dbReference>
<dbReference type="STRING" id="9606.ENSP00000370047"/>
<dbReference type="GlyGen" id="Q6ZN30">
    <property type="glycosylation" value="6 sites, 1 O-linked glycan (4 sites)"/>
</dbReference>
<dbReference type="iPTMnet" id="Q6ZN30"/>
<dbReference type="PhosphoSitePlus" id="Q6ZN30"/>
<dbReference type="BioMuta" id="BNC2"/>
<dbReference type="DMDM" id="74762393"/>
<dbReference type="jPOST" id="Q6ZN30"/>
<dbReference type="MassIVE" id="Q6ZN30"/>
<dbReference type="PaxDb" id="9606-ENSP00000370047"/>
<dbReference type="PeptideAtlas" id="Q6ZN30"/>
<dbReference type="ProteomicsDB" id="67969">
    <molecule id="Q6ZN30-1"/>
</dbReference>
<dbReference type="ProteomicsDB" id="67970">
    <molecule id="Q6ZN30-2"/>
</dbReference>
<dbReference type="Antibodypedia" id="10169">
    <property type="antibodies" value="78 antibodies from 17 providers"/>
</dbReference>
<dbReference type="DNASU" id="54796"/>
<dbReference type="Ensembl" id="ENST00000380672.9">
    <molecule id="Q6ZN30-1"/>
    <property type="protein sequence ID" value="ENSP00000370047.3"/>
    <property type="gene ID" value="ENSG00000173068.19"/>
</dbReference>
<dbReference type="Ensembl" id="ENST00000484726.5">
    <molecule id="Q6ZN30-2"/>
    <property type="protein sequence ID" value="ENSP00000431516.1"/>
    <property type="gene ID" value="ENSG00000173068.19"/>
</dbReference>
<dbReference type="GeneID" id="54796"/>
<dbReference type="KEGG" id="hsa:54796"/>
<dbReference type="MANE-Select" id="ENST00000380672.9">
    <property type="protein sequence ID" value="ENSP00000370047.3"/>
    <property type="RefSeq nucleotide sequence ID" value="NM_017637.6"/>
    <property type="RefSeq protein sequence ID" value="NP_060107.3"/>
</dbReference>
<dbReference type="UCSC" id="uc003zml.4">
    <molecule id="Q6ZN30-1"/>
    <property type="organism name" value="human"/>
</dbReference>
<dbReference type="AGR" id="HGNC:30988"/>
<dbReference type="CTD" id="54796"/>
<dbReference type="DisGeNET" id="54796"/>
<dbReference type="GeneCards" id="BNC2"/>
<dbReference type="HGNC" id="HGNC:30988">
    <property type="gene designation" value="BNC2"/>
</dbReference>
<dbReference type="HPA" id="ENSG00000173068">
    <property type="expression patterns" value="Tissue enhanced (endometrium, ovary, smooth muscle)"/>
</dbReference>
<dbReference type="MalaCards" id="BNC2"/>
<dbReference type="MIM" id="608669">
    <property type="type" value="gene"/>
</dbReference>
<dbReference type="MIM" id="618612">
    <property type="type" value="phenotype"/>
</dbReference>
<dbReference type="neXtProt" id="NX_Q6ZN30"/>
<dbReference type="OpenTargets" id="ENSG00000173068"/>
<dbReference type="Orphanet" id="93110">
    <property type="disease" value="Posterior urethral valve"/>
</dbReference>
<dbReference type="PharmGKB" id="PA134953132"/>
<dbReference type="VEuPathDB" id="HostDB:ENSG00000173068"/>
<dbReference type="eggNOG" id="ENOG502QR8N">
    <property type="taxonomic scope" value="Eukaryota"/>
</dbReference>
<dbReference type="GeneTree" id="ENSGT00390000005844"/>
<dbReference type="InParanoid" id="Q6ZN30"/>
<dbReference type="OMA" id="HQEITMD"/>
<dbReference type="OrthoDB" id="10070972at2759"/>
<dbReference type="PAN-GO" id="Q6ZN30">
    <property type="GO annotations" value="2 GO annotations based on evolutionary models"/>
</dbReference>
<dbReference type="PhylomeDB" id="Q6ZN30"/>
<dbReference type="TreeFam" id="TF350399"/>
<dbReference type="PathwayCommons" id="Q6ZN30"/>
<dbReference type="SignaLink" id="Q6ZN30"/>
<dbReference type="BioGRID-ORCS" id="54796">
    <property type="hits" value="20 hits in 1173 CRISPR screens"/>
</dbReference>
<dbReference type="ChiTaRS" id="BNC2">
    <property type="organism name" value="human"/>
</dbReference>
<dbReference type="GeneWiki" id="BNC2"/>
<dbReference type="GenomeRNAi" id="54796"/>
<dbReference type="Pharos" id="Q6ZN30">
    <property type="development level" value="Tbio"/>
</dbReference>
<dbReference type="PRO" id="PR:Q6ZN30"/>
<dbReference type="Proteomes" id="UP000005640">
    <property type="component" value="Chromosome 9"/>
</dbReference>
<dbReference type="RNAct" id="Q6ZN30">
    <property type="molecule type" value="protein"/>
</dbReference>
<dbReference type="Bgee" id="ENSG00000173068">
    <property type="expression patterns" value="Expressed in germinal epithelium of ovary and 164 other cell types or tissues"/>
</dbReference>
<dbReference type="ExpressionAtlas" id="Q6ZN30">
    <property type="expression patterns" value="baseline and differential"/>
</dbReference>
<dbReference type="GO" id="GO:0000785">
    <property type="term" value="C:chromatin"/>
    <property type="evidence" value="ECO:0007669"/>
    <property type="project" value="Ensembl"/>
</dbReference>
<dbReference type="GO" id="GO:0001650">
    <property type="term" value="C:fibrillar center"/>
    <property type="evidence" value="ECO:0000314"/>
    <property type="project" value="HPA"/>
</dbReference>
<dbReference type="GO" id="GO:0016604">
    <property type="term" value="C:nuclear body"/>
    <property type="evidence" value="ECO:0000314"/>
    <property type="project" value="HPA"/>
</dbReference>
<dbReference type="GO" id="GO:0005634">
    <property type="term" value="C:nucleus"/>
    <property type="evidence" value="ECO:0000318"/>
    <property type="project" value="GO_Central"/>
</dbReference>
<dbReference type="GO" id="GO:0000182">
    <property type="term" value="F:rDNA binding"/>
    <property type="evidence" value="ECO:0007669"/>
    <property type="project" value="Ensembl"/>
</dbReference>
<dbReference type="GO" id="GO:0008270">
    <property type="term" value="F:zinc ion binding"/>
    <property type="evidence" value="ECO:0007669"/>
    <property type="project" value="UniProtKB-KW"/>
</dbReference>
<dbReference type="GO" id="GO:0003416">
    <property type="term" value="P:endochondral bone growth"/>
    <property type="evidence" value="ECO:0007669"/>
    <property type="project" value="Ensembl"/>
</dbReference>
<dbReference type="GO" id="GO:0060485">
    <property type="term" value="P:mesenchyme development"/>
    <property type="evidence" value="ECO:0007669"/>
    <property type="project" value="Ensembl"/>
</dbReference>
<dbReference type="GO" id="GO:0006355">
    <property type="term" value="P:regulation of DNA-templated transcription"/>
    <property type="evidence" value="ECO:0000318"/>
    <property type="project" value="GO_Central"/>
</dbReference>
<dbReference type="GO" id="GO:0060021">
    <property type="term" value="P:roof of mouth development"/>
    <property type="evidence" value="ECO:0007669"/>
    <property type="project" value="Ensembl"/>
</dbReference>
<dbReference type="GO" id="GO:0043586">
    <property type="term" value="P:tongue development"/>
    <property type="evidence" value="ECO:0007669"/>
    <property type="project" value="Ensembl"/>
</dbReference>
<dbReference type="Gene3D" id="3.30.160.60">
    <property type="entry name" value="Classic Zinc Finger"/>
    <property type="match status" value="3"/>
</dbReference>
<dbReference type="InterPro" id="IPR040436">
    <property type="entry name" value="Disconnected-like"/>
</dbReference>
<dbReference type="InterPro" id="IPR013087">
    <property type="entry name" value="Znf_C2H2_type"/>
</dbReference>
<dbReference type="PANTHER" id="PTHR15021">
    <property type="entry name" value="DISCONNECTED-RELATED"/>
    <property type="match status" value="1"/>
</dbReference>
<dbReference type="PANTHER" id="PTHR15021:SF2">
    <property type="entry name" value="ZINC FINGER PROTEIN BASONUCLIN-2"/>
    <property type="match status" value="1"/>
</dbReference>
<dbReference type="Pfam" id="PF00096">
    <property type="entry name" value="zf-C2H2"/>
    <property type="match status" value="1"/>
</dbReference>
<dbReference type="Pfam" id="PF12874">
    <property type="entry name" value="zf-met"/>
    <property type="match status" value="1"/>
</dbReference>
<dbReference type="SMART" id="SM00355">
    <property type="entry name" value="ZnF_C2H2"/>
    <property type="match status" value="6"/>
</dbReference>
<dbReference type="PROSITE" id="PS00028">
    <property type="entry name" value="ZINC_FINGER_C2H2_1"/>
    <property type="match status" value="3"/>
</dbReference>
<dbReference type="PROSITE" id="PS50157">
    <property type="entry name" value="ZINC_FINGER_C2H2_2"/>
    <property type="match status" value="3"/>
</dbReference>
<organism>
    <name type="scientific">Homo sapiens</name>
    <name type="common">Human</name>
    <dbReference type="NCBI Taxonomy" id="9606"/>
    <lineage>
        <taxon>Eukaryota</taxon>
        <taxon>Metazoa</taxon>
        <taxon>Chordata</taxon>
        <taxon>Craniata</taxon>
        <taxon>Vertebrata</taxon>
        <taxon>Euteleostomi</taxon>
        <taxon>Mammalia</taxon>
        <taxon>Eutheria</taxon>
        <taxon>Euarchontoglires</taxon>
        <taxon>Primates</taxon>
        <taxon>Haplorrhini</taxon>
        <taxon>Catarrhini</taxon>
        <taxon>Hominidae</taxon>
        <taxon>Homo</taxon>
    </lineage>
</organism>
<sequence length="1099" mass="122330">MAHLGPTPPPHSLNYKSEDRLSEQDWPAYFKVPCCGVDTSQIESEEAEVDVRERETQRDREPKRARDLTLRDSCTDNSMQFGTRTTTAEPGFMGTWQNADTNLLFRMSQQAIRCTLVNCTCECFQPGKINLRTCDQCKHGWVAHALDKLSTQHLYHPTQVEIVQSNVVFDISSLMLYGTQAVPVRLKILLDRLFSVLKQEEVLHILHGLGWTLRDYVRGYILQDAAGKVLDRWAIMSREEEIITLQQFLRFGETKSIVELMAIQEKEGQAVAVPSSKTDSDIRTFIESNNRTRSPSLLAHLENSNPSSIHHFENIPNSLAFLLPFQYINPVSAPLLGLPPNGLLLEQPGLRLREPSLSTQNEYNESSESEVSPTPYKNDQTPNRNALTSITNVEPKTEPACVSPIQNSAPVSDLTKTEHPKSSFRIHRMRRMGSASRKGRVFCNACGKTFYDKGTLKIHYNAVHLKIKHRCTIEGCNMVFSSLRSRNRHSANPNPRLHMPMLRNNRDKDLIRATSGAATPVIASTKSNLALTSPGRPPMGFTTPPLDPVLQNPLPSQLVFSGLKTVQPVPPFYRSLLTPGEMVSPPTSLPTSPIIPTSGTIEQHPPPPSEPVVPAVMMATHEPSADLAPKKKPRKSSMPVKIEKEIIDTADEFDDEDDDPNDGGAVVNDMSHDNHCHSQEEMSPGMSVKDFSKHNRTRCISRTEIRRADSMTSEDQEPERDYENESESSEPKLGEESMEGDEHIHSEVSEKVLMNSERPDENHSEPSHQDVIKVKEEFTDPTYDMFYMSQYGLYNGGGASMAALHESFTSSLNYGSPQKFSPEGDLCSSPDPKICYVCKKSFKSSYSVKLHYRNVHLKEMHVCTVAGCNAAFPSRRSRDRHSANINLHRKLLTKELDDMGLDSSQPSLSKDLRDEFLVKIYGAQHPMGLDVREDASSPAGTEDSHLNGYGRGMAEDYMVLDLSTTSSLQSSSSIHSSRESDAGSDEGILLDDIDGASDSGESAHKAEAPALPGSLGAEVSGSLMFSSLSGSNGGIMCNICHKMYSNKGTLRVHYKTVHLREMHKCKVPGCNMMFSSVRSRNRHSQNPNLHKNIPFTSVD</sequence>